<reference key="1">
    <citation type="journal article" date="2004" name="Nat. Biotechnol.">
        <title>Complete sequence and comparative genome analysis of the dairy bacterium Streptococcus thermophilus.</title>
        <authorList>
            <person name="Bolotin A."/>
            <person name="Quinquis B."/>
            <person name="Renault P."/>
            <person name="Sorokin A."/>
            <person name="Ehrlich S.D."/>
            <person name="Kulakauskas S."/>
            <person name="Lapidus A."/>
            <person name="Goltsman E."/>
            <person name="Mazur M."/>
            <person name="Pusch G.D."/>
            <person name="Fonstein M."/>
            <person name="Overbeek R."/>
            <person name="Kyprides N."/>
            <person name="Purnelle B."/>
            <person name="Prozzi D."/>
            <person name="Ngui K."/>
            <person name="Masuy D."/>
            <person name="Hancy F."/>
            <person name="Burteau S."/>
            <person name="Boutry M."/>
            <person name="Delcour J."/>
            <person name="Goffeau A."/>
            <person name="Hols P."/>
        </authorList>
    </citation>
    <scope>NUCLEOTIDE SEQUENCE [LARGE SCALE GENOMIC DNA]</scope>
    <source>
        <strain>CNRZ 1066</strain>
    </source>
</reference>
<gene>
    <name evidence="1" type="primary">tmcAL</name>
    <name type="ordered locus">str1615</name>
</gene>
<name>TMCAL_STRT1</name>
<sequence length="363" mass="40603">MTVTGIIAEFNPFHNGHKYLLDYAEGIKIVAMSGNFVQRGEPAIVDKWIRAQMALENGADLVVELPFFTAVQSADYFASGAVDILSRLGIDSLTFGTEEVLDYQTIADVYSEKSEEMEAFVESLPSDLSYPQKTQKMWEKFAGVDFTGNTPNHILGLAYAKACAGKGITLNPIQRQGAGYHSLDKKVSFASATSLRLHKEDSDFVDKFMPNSKLFQTSPQVSWDNYFQLLVYQILTNPDLTSVFQVNEEIASRLKAAVREISSVEELVDKVATKRYTKARVRRILTYILVGAVDNSLPKSIHVLGFSQKGQFHLKSVKKSVDIVARIGRKPWDMLTQQADNVYQLGNPELCEQNFGRVPIRVK</sequence>
<protein>
    <recommendedName>
        <fullName evidence="1">tRNA(Met) cytidine acetate ligase</fullName>
        <ecNumber evidence="1">6.3.4.-</ecNumber>
    </recommendedName>
</protein>
<evidence type="ECO:0000255" key="1">
    <source>
        <dbReference type="HAMAP-Rule" id="MF_01539"/>
    </source>
</evidence>
<accession>Q5LYG0</accession>
<comment type="function">
    <text evidence="1">Catalyzes the formation of N(4)-acetylcytidine (ac(4)C) at the wobble position of elongator tRNA(Met), using acetate and ATP as substrates. First activates an acetate ion to form acetyladenylate (Ac-AMP) and then transfers the acetyl group to tRNA to form ac(4)C34.</text>
</comment>
<comment type="catalytic activity">
    <reaction evidence="1">
        <text>cytidine(34) in elongator tRNA(Met) + acetate + ATP = N(4)-acetylcytidine(34) in elongator tRNA(Met) + AMP + diphosphate</text>
        <dbReference type="Rhea" id="RHEA:58144"/>
        <dbReference type="Rhea" id="RHEA-COMP:10693"/>
        <dbReference type="Rhea" id="RHEA-COMP:10694"/>
        <dbReference type="ChEBI" id="CHEBI:30089"/>
        <dbReference type="ChEBI" id="CHEBI:30616"/>
        <dbReference type="ChEBI" id="CHEBI:33019"/>
        <dbReference type="ChEBI" id="CHEBI:74900"/>
        <dbReference type="ChEBI" id="CHEBI:82748"/>
        <dbReference type="ChEBI" id="CHEBI:456215"/>
    </reaction>
</comment>
<comment type="subcellular location">
    <subcellularLocation>
        <location evidence="1">Cytoplasm</location>
    </subcellularLocation>
</comment>
<comment type="similarity">
    <text evidence="1">Belongs to the TmcAL family.</text>
</comment>
<feature type="chain" id="PRO_0000147195" description="tRNA(Met) cytidine acetate ligase">
    <location>
        <begin position="1"/>
        <end position="363"/>
    </location>
</feature>
<feature type="binding site" evidence="1">
    <location>
        <begin position="7"/>
        <end position="20"/>
    </location>
    <ligand>
        <name>ATP</name>
        <dbReference type="ChEBI" id="CHEBI:30616"/>
    </ligand>
</feature>
<feature type="binding site" evidence="1">
    <location>
        <position position="96"/>
    </location>
    <ligand>
        <name>ATP</name>
        <dbReference type="ChEBI" id="CHEBI:30616"/>
    </ligand>
</feature>
<feature type="binding site" evidence="1">
    <location>
        <position position="152"/>
    </location>
    <ligand>
        <name>ATP</name>
        <dbReference type="ChEBI" id="CHEBI:30616"/>
    </ligand>
</feature>
<feature type="binding site" evidence="1">
    <location>
        <position position="175"/>
    </location>
    <ligand>
        <name>ATP</name>
        <dbReference type="ChEBI" id="CHEBI:30616"/>
    </ligand>
</feature>
<proteinExistence type="inferred from homology"/>
<organism>
    <name type="scientific">Streptococcus thermophilus (strain CNRZ 1066)</name>
    <dbReference type="NCBI Taxonomy" id="299768"/>
    <lineage>
        <taxon>Bacteria</taxon>
        <taxon>Bacillati</taxon>
        <taxon>Bacillota</taxon>
        <taxon>Bacilli</taxon>
        <taxon>Lactobacillales</taxon>
        <taxon>Streptococcaceae</taxon>
        <taxon>Streptococcus</taxon>
    </lineage>
</organism>
<dbReference type="EC" id="6.3.4.-" evidence="1"/>
<dbReference type="EMBL" id="CP000024">
    <property type="protein sequence ID" value="AAV63145.1"/>
    <property type="molecule type" value="Genomic_DNA"/>
</dbReference>
<dbReference type="RefSeq" id="WP_011227489.1">
    <property type="nucleotide sequence ID" value="NC_006449.1"/>
</dbReference>
<dbReference type="SMR" id="Q5LYG0"/>
<dbReference type="KEGG" id="stc:str1615"/>
<dbReference type="HOGENOM" id="CLU_038915_0_2_9"/>
<dbReference type="GO" id="GO:0005737">
    <property type="term" value="C:cytoplasm"/>
    <property type="evidence" value="ECO:0007669"/>
    <property type="project" value="UniProtKB-SubCell"/>
</dbReference>
<dbReference type="GO" id="GO:0005524">
    <property type="term" value="F:ATP binding"/>
    <property type="evidence" value="ECO:0007669"/>
    <property type="project" value="UniProtKB-KW"/>
</dbReference>
<dbReference type="GO" id="GO:0016879">
    <property type="term" value="F:ligase activity, forming carbon-nitrogen bonds"/>
    <property type="evidence" value="ECO:0007669"/>
    <property type="project" value="UniProtKB-UniRule"/>
</dbReference>
<dbReference type="GO" id="GO:0000049">
    <property type="term" value="F:tRNA binding"/>
    <property type="evidence" value="ECO:0007669"/>
    <property type="project" value="UniProtKB-KW"/>
</dbReference>
<dbReference type="GO" id="GO:0006400">
    <property type="term" value="P:tRNA modification"/>
    <property type="evidence" value="ECO:0007669"/>
    <property type="project" value="UniProtKB-UniRule"/>
</dbReference>
<dbReference type="Gene3D" id="3.40.50.620">
    <property type="entry name" value="HUPs"/>
    <property type="match status" value="1"/>
</dbReference>
<dbReference type="HAMAP" id="MF_01539">
    <property type="entry name" value="TmcAL"/>
    <property type="match status" value="1"/>
</dbReference>
<dbReference type="InterPro" id="IPR014729">
    <property type="entry name" value="Rossmann-like_a/b/a_fold"/>
</dbReference>
<dbReference type="InterPro" id="IPR008513">
    <property type="entry name" value="tRNA(Met)_cyd_acetate_ligase"/>
</dbReference>
<dbReference type="NCBIfam" id="NF010191">
    <property type="entry name" value="PRK13670.1"/>
    <property type="match status" value="1"/>
</dbReference>
<dbReference type="PANTHER" id="PTHR37825">
    <property type="entry name" value="TRNA(MET) CYTIDINE ACETATE LIGASE"/>
    <property type="match status" value="1"/>
</dbReference>
<dbReference type="PANTHER" id="PTHR37825:SF1">
    <property type="entry name" value="TRNA(MET) CYTIDINE ACETATE LIGASE"/>
    <property type="match status" value="1"/>
</dbReference>
<dbReference type="Pfam" id="PF05636">
    <property type="entry name" value="HIGH_NTase1"/>
    <property type="match status" value="1"/>
</dbReference>
<dbReference type="SUPFAM" id="SSF52374">
    <property type="entry name" value="Nucleotidylyl transferase"/>
    <property type="match status" value="1"/>
</dbReference>
<keyword id="KW-0067">ATP-binding</keyword>
<keyword id="KW-0963">Cytoplasm</keyword>
<keyword id="KW-0436">Ligase</keyword>
<keyword id="KW-0547">Nucleotide-binding</keyword>
<keyword id="KW-0694">RNA-binding</keyword>
<keyword id="KW-0819">tRNA processing</keyword>
<keyword id="KW-0820">tRNA-binding</keyword>